<name>THYX_MYCTO</name>
<comment type="function">
    <text evidence="1">Catalyzes the reductive methylation of 2'-deoxyuridine-5'-monophosphate (dUMP) to 2'-deoxythymidine-5'-monophosphate (dTMP) while utilizing 5,10-methylenetetrahydrofolate (mTHF) as the methyl donor, and NADPH and FADH(2) as the reductant.</text>
</comment>
<comment type="catalytic activity">
    <reaction evidence="1">
        <text>dUMP + (6R)-5,10-methylene-5,6,7,8-tetrahydrofolate + NADPH + H(+) = dTMP + (6S)-5,6,7,8-tetrahydrofolate + NADP(+)</text>
        <dbReference type="Rhea" id="RHEA:29043"/>
        <dbReference type="ChEBI" id="CHEBI:15378"/>
        <dbReference type="ChEBI" id="CHEBI:15636"/>
        <dbReference type="ChEBI" id="CHEBI:57453"/>
        <dbReference type="ChEBI" id="CHEBI:57783"/>
        <dbReference type="ChEBI" id="CHEBI:58349"/>
        <dbReference type="ChEBI" id="CHEBI:63528"/>
        <dbReference type="ChEBI" id="CHEBI:246422"/>
        <dbReference type="EC" id="2.1.1.148"/>
    </reaction>
</comment>
<comment type="cofactor">
    <cofactor evidence="1">
        <name>FAD</name>
        <dbReference type="ChEBI" id="CHEBI:57692"/>
    </cofactor>
    <text evidence="1">Binds 4 FAD per tetramer. Each FAD binding site is formed by three monomers.</text>
</comment>
<comment type="pathway">
    <text evidence="1">Pyrimidine metabolism; dTTP biosynthesis.</text>
</comment>
<comment type="subunit">
    <text evidence="1">Homotetramer.</text>
</comment>
<comment type="similarity">
    <text evidence="1">Belongs to the thymidylate synthase ThyX family.</text>
</comment>
<protein>
    <recommendedName>
        <fullName evidence="1">Flavin-dependent thymidylate synthase</fullName>
        <shortName evidence="1">FDTS</shortName>
        <ecNumber evidence="1">2.1.1.148</ecNumber>
    </recommendedName>
    <alternativeName>
        <fullName evidence="1">FAD-dependent thymidylate synthase</fullName>
    </alternativeName>
    <alternativeName>
        <fullName evidence="1">Thymidylate synthase ThyX</fullName>
        <shortName evidence="1">TS</shortName>
        <shortName evidence="1">TSase</shortName>
    </alternativeName>
</protein>
<organism>
    <name type="scientific">Mycobacterium tuberculosis (strain CDC 1551 / Oshkosh)</name>
    <dbReference type="NCBI Taxonomy" id="83331"/>
    <lineage>
        <taxon>Bacteria</taxon>
        <taxon>Bacillati</taxon>
        <taxon>Actinomycetota</taxon>
        <taxon>Actinomycetes</taxon>
        <taxon>Mycobacteriales</taxon>
        <taxon>Mycobacteriaceae</taxon>
        <taxon>Mycobacterium</taxon>
        <taxon>Mycobacterium tuberculosis complex</taxon>
    </lineage>
</organism>
<gene>
    <name evidence="1" type="primary">thyX</name>
    <name type="ordered locus">MT2824</name>
</gene>
<proteinExistence type="inferred from homology"/>
<feature type="chain" id="PRO_0000428420" description="Flavin-dependent thymidylate synthase">
    <location>
        <begin position="1"/>
        <end position="250"/>
    </location>
</feature>
<feature type="domain" description="ThyX" evidence="2">
    <location>
        <begin position="7"/>
        <end position="233"/>
    </location>
</feature>
<feature type="short sequence motif" description="ThyX motif" evidence="1">
    <location>
        <begin position="95"/>
        <end position="105"/>
    </location>
</feature>
<feature type="active site" description="Involved in ionization of N3 of dUMP, leading to its activation" evidence="1">
    <location>
        <position position="199"/>
    </location>
</feature>
<feature type="binding site" evidence="1">
    <location>
        <position position="71"/>
    </location>
    <ligand>
        <name>FAD</name>
        <dbReference type="ChEBI" id="CHEBI:57692"/>
        <note>ligand shared between neighboring subunits</note>
    </ligand>
</feature>
<feature type="binding site" evidence="1">
    <location>
        <begin position="92"/>
        <end position="95"/>
    </location>
    <ligand>
        <name>dUMP</name>
        <dbReference type="ChEBI" id="CHEBI:246422"/>
        <note>ligand shared between dimeric partners</note>
    </ligand>
</feature>
<feature type="binding site" evidence="1">
    <location>
        <begin position="95"/>
        <end position="97"/>
    </location>
    <ligand>
        <name>FAD</name>
        <dbReference type="ChEBI" id="CHEBI:57692"/>
        <note>ligand shared between neighboring subunits</note>
    </ligand>
</feature>
<feature type="binding site" description="in other chain" evidence="1">
    <location>
        <begin position="103"/>
        <end position="107"/>
    </location>
    <ligand>
        <name>dUMP</name>
        <dbReference type="ChEBI" id="CHEBI:246422"/>
        <note>ligand shared between dimeric partners</note>
    </ligand>
</feature>
<feature type="binding site" evidence="1">
    <location>
        <position position="103"/>
    </location>
    <ligand>
        <name>FAD</name>
        <dbReference type="ChEBI" id="CHEBI:57692"/>
        <note>ligand shared between neighboring subunits</note>
    </ligand>
</feature>
<feature type="binding site" description="in other chain" evidence="1">
    <location>
        <position position="172"/>
    </location>
    <ligand>
        <name>dUMP</name>
        <dbReference type="ChEBI" id="CHEBI:246422"/>
        <note>ligand shared between dimeric partners</note>
    </ligand>
</feature>
<feature type="binding site" evidence="1">
    <location>
        <begin position="188"/>
        <end position="190"/>
    </location>
    <ligand>
        <name>FAD</name>
        <dbReference type="ChEBI" id="CHEBI:57692"/>
        <note>ligand shared between neighboring subunits</note>
    </ligand>
</feature>
<feature type="binding site" evidence="1">
    <location>
        <position position="194"/>
    </location>
    <ligand>
        <name>FAD</name>
        <dbReference type="ChEBI" id="CHEBI:57692"/>
        <note>ligand shared between neighboring subunits</note>
    </ligand>
</feature>
<feature type="binding site" evidence="1">
    <location>
        <position position="199"/>
    </location>
    <ligand>
        <name>dUMP</name>
        <dbReference type="ChEBI" id="CHEBI:246422"/>
        <note>ligand shared between dimeric partners</note>
    </ligand>
</feature>
<dbReference type="EC" id="2.1.1.148" evidence="1"/>
<dbReference type="EMBL" id="AE000516">
    <property type="protein sequence ID" value="AAK47143.1"/>
    <property type="molecule type" value="Genomic_DNA"/>
</dbReference>
<dbReference type="PIR" id="A70880">
    <property type="entry name" value="A70880"/>
</dbReference>
<dbReference type="RefSeq" id="WP_003899465.1">
    <property type="nucleotide sequence ID" value="NZ_KK341227.1"/>
</dbReference>
<dbReference type="SMR" id="P9WG56"/>
<dbReference type="KEGG" id="mtc:MT2824"/>
<dbReference type="PATRIC" id="fig|83331.31.peg.3045"/>
<dbReference type="HOGENOM" id="CLU_077585_1_0_11"/>
<dbReference type="UniPathway" id="UPA00575"/>
<dbReference type="Proteomes" id="UP000001020">
    <property type="component" value="Chromosome"/>
</dbReference>
<dbReference type="GO" id="GO:0050660">
    <property type="term" value="F:flavin adenine dinucleotide binding"/>
    <property type="evidence" value="ECO:0007669"/>
    <property type="project" value="InterPro"/>
</dbReference>
<dbReference type="GO" id="GO:0070402">
    <property type="term" value="F:NADPH binding"/>
    <property type="evidence" value="ECO:0007669"/>
    <property type="project" value="TreeGrafter"/>
</dbReference>
<dbReference type="GO" id="GO:0050797">
    <property type="term" value="F:thymidylate synthase (FAD) activity"/>
    <property type="evidence" value="ECO:0007669"/>
    <property type="project" value="UniProtKB-UniRule"/>
</dbReference>
<dbReference type="GO" id="GO:0004799">
    <property type="term" value="F:thymidylate synthase activity"/>
    <property type="evidence" value="ECO:0007669"/>
    <property type="project" value="TreeGrafter"/>
</dbReference>
<dbReference type="GO" id="GO:0006231">
    <property type="term" value="P:dTMP biosynthetic process"/>
    <property type="evidence" value="ECO:0007669"/>
    <property type="project" value="UniProtKB-UniRule"/>
</dbReference>
<dbReference type="GO" id="GO:0006235">
    <property type="term" value="P:dTTP biosynthetic process"/>
    <property type="evidence" value="ECO:0007669"/>
    <property type="project" value="UniProtKB-UniRule"/>
</dbReference>
<dbReference type="GO" id="GO:0032259">
    <property type="term" value="P:methylation"/>
    <property type="evidence" value="ECO:0007669"/>
    <property type="project" value="UniProtKB-KW"/>
</dbReference>
<dbReference type="CDD" id="cd20175">
    <property type="entry name" value="ThyX"/>
    <property type="match status" value="1"/>
</dbReference>
<dbReference type="Gene3D" id="3.30.1360.170">
    <property type="match status" value="1"/>
</dbReference>
<dbReference type="HAMAP" id="MF_01408">
    <property type="entry name" value="ThyX"/>
    <property type="match status" value="1"/>
</dbReference>
<dbReference type="InterPro" id="IPR003669">
    <property type="entry name" value="Thymidylate_synthase_ThyX"/>
</dbReference>
<dbReference type="InterPro" id="IPR036098">
    <property type="entry name" value="Thymidylate_synthase_ThyX_sf"/>
</dbReference>
<dbReference type="NCBIfam" id="TIGR02170">
    <property type="entry name" value="thyX"/>
    <property type="match status" value="1"/>
</dbReference>
<dbReference type="PANTHER" id="PTHR34934">
    <property type="entry name" value="FLAVIN-DEPENDENT THYMIDYLATE SYNTHASE"/>
    <property type="match status" value="1"/>
</dbReference>
<dbReference type="PANTHER" id="PTHR34934:SF1">
    <property type="entry name" value="FLAVIN-DEPENDENT THYMIDYLATE SYNTHASE"/>
    <property type="match status" value="1"/>
</dbReference>
<dbReference type="Pfam" id="PF02511">
    <property type="entry name" value="Thy1"/>
    <property type="match status" value="1"/>
</dbReference>
<dbReference type="SUPFAM" id="SSF69796">
    <property type="entry name" value="Thymidylate synthase-complementing protein Thy1"/>
    <property type="match status" value="1"/>
</dbReference>
<dbReference type="PROSITE" id="PS51331">
    <property type="entry name" value="THYX"/>
    <property type="match status" value="1"/>
</dbReference>
<reference key="1">
    <citation type="journal article" date="2002" name="J. Bacteriol.">
        <title>Whole-genome comparison of Mycobacterium tuberculosis clinical and laboratory strains.</title>
        <authorList>
            <person name="Fleischmann R.D."/>
            <person name="Alland D."/>
            <person name="Eisen J.A."/>
            <person name="Carpenter L."/>
            <person name="White O."/>
            <person name="Peterson J.D."/>
            <person name="DeBoy R.T."/>
            <person name="Dodson R.J."/>
            <person name="Gwinn M.L."/>
            <person name="Haft D.H."/>
            <person name="Hickey E.K."/>
            <person name="Kolonay J.F."/>
            <person name="Nelson W.C."/>
            <person name="Umayam L.A."/>
            <person name="Ermolaeva M.D."/>
            <person name="Salzberg S.L."/>
            <person name="Delcher A."/>
            <person name="Utterback T.R."/>
            <person name="Weidman J.F."/>
            <person name="Khouri H.M."/>
            <person name="Gill J."/>
            <person name="Mikula A."/>
            <person name="Bishai W."/>
            <person name="Jacobs W.R. Jr."/>
            <person name="Venter J.C."/>
            <person name="Fraser C.M."/>
        </authorList>
    </citation>
    <scope>NUCLEOTIDE SEQUENCE [LARGE SCALE GENOMIC DNA]</scope>
    <source>
        <strain>CDC 1551 / Oshkosh</strain>
    </source>
</reference>
<accession>P9WG56</accession>
<accession>L0TD90</accession>
<accession>O33296</accession>
<accession>P66930</accession>
<keyword id="KW-0274">FAD</keyword>
<keyword id="KW-0285">Flavoprotein</keyword>
<keyword id="KW-0489">Methyltransferase</keyword>
<keyword id="KW-0521">NADP</keyword>
<keyword id="KW-0545">Nucleotide biosynthesis</keyword>
<keyword id="KW-1185">Reference proteome</keyword>
<keyword id="KW-0808">Transferase</keyword>
<sequence length="250" mass="27591">MAETAPLRVQLIAKTDFLAPPDVPWTTDADGGPALVEFAGRACYQSWSKPNPKTATNAGYLRHIIDVGHFSVLEHASVSFYITGISRSCTHELIRHRHFSYSQLSQRYVPEKDSRVVVPPGMEDDADLRHILTEAADAARATYSELLAKLEAKFADQPNAILRRKQARQAARAVLPNATETRIVVTGNYRAWRHFIAMRASEHADVEIRRLAIECLRQLAAVAPAVFADFEVTTLADGTEVATSPLATEA</sequence>
<evidence type="ECO:0000255" key="1">
    <source>
        <dbReference type="HAMAP-Rule" id="MF_01408"/>
    </source>
</evidence>
<evidence type="ECO:0000255" key="2">
    <source>
        <dbReference type="PROSITE-ProRule" id="PRU00661"/>
    </source>
</evidence>